<proteinExistence type="inferred from homology"/>
<keyword id="KW-0066">ATP synthesis</keyword>
<keyword id="KW-0067">ATP-binding</keyword>
<keyword id="KW-0139">CF(1)</keyword>
<keyword id="KW-0150">Chloroplast</keyword>
<keyword id="KW-0375">Hydrogen ion transport</keyword>
<keyword id="KW-0406">Ion transport</keyword>
<keyword id="KW-0472">Membrane</keyword>
<keyword id="KW-0547">Nucleotide-binding</keyword>
<keyword id="KW-0934">Plastid</keyword>
<keyword id="KW-0793">Thylakoid</keyword>
<keyword id="KW-1278">Translocase</keyword>
<keyword id="KW-0813">Transport</keyword>
<organism>
    <name type="scientific">Nymphaea odorata</name>
    <name type="common">White water lily</name>
    <dbReference type="NCBI Taxonomy" id="4419"/>
    <lineage>
        <taxon>Eukaryota</taxon>
        <taxon>Viridiplantae</taxon>
        <taxon>Streptophyta</taxon>
        <taxon>Embryophyta</taxon>
        <taxon>Tracheophyta</taxon>
        <taxon>Spermatophyta</taxon>
        <taxon>Magnoliopsida</taxon>
        <taxon>Nymphaeales</taxon>
        <taxon>Nymphaeaceae</taxon>
        <taxon>Nymphaea</taxon>
    </lineage>
</organism>
<evidence type="ECO:0000255" key="1">
    <source>
        <dbReference type="HAMAP-Rule" id="MF_01347"/>
    </source>
</evidence>
<gene>
    <name evidence="1" type="primary">atpB</name>
</gene>
<protein>
    <recommendedName>
        <fullName evidence="1">ATP synthase subunit beta, chloroplastic</fullName>
        <ecNumber evidence="1">7.1.2.2</ecNumber>
    </recommendedName>
    <alternativeName>
        <fullName evidence="1">ATP synthase F1 sector subunit beta</fullName>
    </alternativeName>
    <alternativeName>
        <fullName evidence="1">F-ATPase subunit beta</fullName>
    </alternativeName>
</protein>
<sequence>MRINPTTSGPRVSTLGKKFQGRIAQIIGPVLXVAFSTGKMPNIYNSLVVXGRDTAGQEINVTCEVQQLLGNNRVRAVAMSATDGLTRGMEVIDTGAPLSVPVGGATLGRIFNVLGEPVDNLGPVDTRTTSPIHRSAPAFTQLDTKLSIFETGIKVVDLLAPYRRGGKIGLFGGAGVGKTVLIMELINNIAKAHGGVSVFGGVGERTREGNDLYMEMKESGVINEENIAESKVALVYGQMNEPPGARMRVGLTALTMAEYFRDVNEQDVLLFIDNIFRFVQAGSEVSALLGRMPSAVGYQPTLSTEMGSLQERITSTKEGSITSIQAVYVPADDLTDPAPATTFAHLDATTVLSRGLAAKGIYPAVDPLDSTSTMLQPRIVGEEHYETAQRVKQTLQRYKELQDIIAILGLDELSEEDRLTVARARKIERFLSQPFFVAEVFTGSPGKYVGLAETIRGFQLILSGELDSFPEQAFYLVGNIDEATAKAMNLEVESKLKK</sequence>
<dbReference type="EC" id="7.1.2.2" evidence="1"/>
<dbReference type="EMBL" id="AJ235544">
    <property type="protein sequence ID" value="CAB89719.1"/>
    <property type="molecule type" value="Genomic_DNA"/>
</dbReference>
<dbReference type="GO" id="GO:0009535">
    <property type="term" value="C:chloroplast thylakoid membrane"/>
    <property type="evidence" value="ECO:0007669"/>
    <property type="project" value="UniProtKB-SubCell"/>
</dbReference>
<dbReference type="GO" id="GO:0005739">
    <property type="term" value="C:mitochondrion"/>
    <property type="evidence" value="ECO:0007669"/>
    <property type="project" value="GOC"/>
</dbReference>
<dbReference type="GO" id="GO:0045259">
    <property type="term" value="C:proton-transporting ATP synthase complex"/>
    <property type="evidence" value="ECO:0007669"/>
    <property type="project" value="UniProtKB-KW"/>
</dbReference>
<dbReference type="GO" id="GO:0005524">
    <property type="term" value="F:ATP binding"/>
    <property type="evidence" value="ECO:0007669"/>
    <property type="project" value="UniProtKB-UniRule"/>
</dbReference>
<dbReference type="GO" id="GO:0016887">
    <property type="term" value="F:ATP hydrolysis activity"/>
    <property type="evidence" value="ECO:0007669"/>
    <property type="project" value="InterPro"/>
</dbReference>
<dbReference type="GO" id="GO:0046933">
    <property type="term" value="F:proton-transporting ATP synthase activity, rotational mechanism"/>
    <property type="evidence" value="ECO:0007669"/>
    <property type="project" value="UniProtKB-UniRule"/>
</dbReference>
<dbReference type="GO" id="GO:0042776">
    <property type="term" value="P:proton motive force-driven mitochondrial ATP synthesis"/>
    <property type="evidence" value="ECO:0007669"/>
    <property type="project" value="TreeGrafter"/>
</dbReference>
<dbReference type="CDD" id="cd18110">
    <property type="entry name" value="ATP-synt_F1_beta_C"/>
    <property type="match status" value="1"/>
</dbReference>
<dbReference type="CDD" id="cd18115">
    <property type="entry name" value="ATP-synt_F1_beta_N"/>
    <property type="match status" value="1"/>
</dbReference>
<dbReference type="CDD" id="cd01133">
    <property type="entry name" value="F1-ATPase_beta_CD"/>
    <property type="match status" value="1"/>
</dbReference>
<dbReference type="FunFam" id="1.10.1140.10:FF:000001">
    <property type="entry name" value="ATP synthase subunit beta"/>
    <property type="match status" value="1"/>
</dbReference>
<dbReference type="FunFam" id="3.40.50.12240:FF:000006">
    <property type="entry name" value="ATP synthase subunit beta"/>
    <property type="match status" value="1"/>
</dbReference>
<dbReference type="FunFam" id="3.40.50.300:FF:000004">
    <property type="entry name" value="ATP synthase subunit beta"/>
    <property type="match status" value="1"/>
</dbReference>
<dbReference type="FunFam" id="2.40.10.170:FF:000002">
    <property type="entry name" value="ATP synthase subunit beta, chloroplastic"/>
    <property type="match status" value="1"/>
</dbReference>
<dbReference type="Gene3D" id="2.40.10.170">
    <property type="match status" value="1"/>
</dbReference>
<dbReference type="Gene3D" id="1.10.1140.10">
    <property type="entry name" value="Bovine Mitochondrial F1-atpase, Atp Synthase Beta Chain, Chain D, domain 3"/>
    <property type="match status" value="1"/>
</dbReference>
<dbReference type="Gene3D" id="3.40.50.300">
    <property type="entry name" value="P-loop containing nucleotide triphosphate hydrolases"/>
    <property type="match status" value="1"/>
</dbReference>
<dbReference type="HAMAP" id="MF_01347">
    <property type="entry name" value="ATP_synth_beta_bact"/>
    <property type="match status" value="1"/>
</dbReference>
<dbReference type="InterPro" id="IPR003593">
    <property type="entry name" value="AAA+_ATPase"/>
</dbReference>
<dbReference type="InterPro" id="IPR055190">
    <property type="entry name" value="ATP-synt_VA_C"/>
</dbReference>
<dbReference type="InterPro" id="IPR005722">
    <property type="entry name" value="ATP_synth_F1_bsu"/>
</dbReference>
<dbReference type="InterPro" id="IPR020003">
    <property type="entry name" value="ATPase_a/bsu_AS"/>
</dbReference>
<dbReference type="InterPro" id="IPR050053">
    <property type="entry name" value="ATPase_alpha/beta_chains"/>
</dbReference>
<dbReference type="InterPro" id="IPR004100">
    <property type="entry name" value="ATPase_F1/V1/A1_a/bsu_N"/>
</dbReference>
<dbReference type="InterPro" id="IPR036121">
    <property type="entry name" value="ATPase_F1/V1/A1_a/bsu_N_sf"/>
</dbReference>
<dbReference type="InterPro" id="IPR000194">
    <property type="entry name" value="ATPase_F1/V1/A1_a/bsu_nucl-bd"/>
</dbReference>
<dbReference type="InterPro" id="IPR024034">
    <property type="entry name" value="ATPase_F1/V1_b/a_C"/>
</dbReference>
<dbReference type="InterPro" id="IPR027417">
    <property type="entry name" value="P-loop_NTPase"/>
</dbReference>
<dbReference type="NCBIfam" id="TIGR01039">
    <property type="entry name" value="atpD"/>
    <property type="match status" value="1"/>
</dbReference>
<dbReference type="PANTHER" id="PTHR15184">
    <property type="entry name" value="ATP SYNTHASE"/>
    <property type="match status" value="1"/>
</dbReference>
<dbReference type="PANTHER" id="PTHR15184:SF71">
    <property type="entry name" value="ATP SYNTHASE SUBUNIT BETA, MITOCHONDRIAL"/>
    <property type="match status" value="1"/>
</dbReference>
<dbReference type="Pfam" id="PF00006">
    <property type="entry name" value="ATP-synt_ab"/>
    <property type="match status" value="1"/>
</dbReference>
<dbReference type="Pfam" id="PF02874">
    <property type="entry name" value="ATP-synt_ab_N"/>
    <property type="match status" value="1"/>
</dbReference>
<dbReference type="Pfam" id="PF22919">
    <property type="entry name" value="ATP-synt_VA_C"/>
    <property type="match status" value="1"/>
</dbReference>
<dbReference type="SMART" id="SM00382">
    <property type="entry name" value="AAA"/>
    <property type="match status" value="1"/>
</dbReference>
<dbReference type="SUPFAM" id="SSF47917">
    <property type="entry name" value="C-terminal domain of alpha and beta subunits of F1 ATP synthase"/>
    <property type="match status" value="1"/>
</dbReference>
<dbReference type="SUPFAM" id="SSF50615">
    <property type="entry name" value="N-terminal domain of alpha and beta subunits of F1 ATP synthase"/>
    <property type="match status" value="1"/>
</dbReference>
<dbReference type="SUPFAM" id="SSF52540">
    <property type="entry name" value="P-loop containing nucleoside triphosphate hydrolases"/>
    <property type="match status" value="1"/>
</dbReference>
<dbReference type="PROSITE" id="PS00152">
    <property type="entry name" value="ATPASE_ALPHA_BETA"/>
    <property type="match status" value="1"/>
</dbReference>
<accession>Q9MU26</accession>
<geneLocation type="chloroplast"/>
<name>ATPB_NYMOD</name>
<feature type="chain" id="PRO_0000254501" description="ATP synthase subunit beta, chloroplastic">
    <location>
        <begin position="1"/>
        <end position="498"/>
    </location>
</feature>
<feature type="binding site" evidence="1">
    <location>
        <begin position="172"/>
        <end position="179"/>
    </location>
    <ligand>
        <name>ATP</name>
        <dbReference type="ChEBI" id="CHEBI:30616"/>
    </ligand>
</feature>
<comment type="function">
    <text evidence="1">Produces ATP from ADP in the presence of a proton gradient across the membrane. The catalytic sites are hosted primarily by the beta subunits.</text>
</comment>
<comment type="catalytic activity">
    <reaction evidence="1">
        <text>ATP + H2O + 4 H(+)(in) = ADP + phosphate + 5 H(+)(out)</text>
        <dbReference type="Rhea" id="RHEA:57720"/>
        <dbReference type="ChEBI" id="CHEBI:15377"/>
        <dbReference type="ChEBI" id="CHEBI:15378"/>
        <dbReference type="ChEBI" id="CHEBI:30616"/>
        <dbReference type="ChEBI" id="CHEBI:43474"/>
        <dbReference type="ChEBI" id="CHEBI:456216"/>
        <dbReference type="EC" id="7.1.2.2"/>
    </reaction>
</comment>
<comment type="subunit">
    <text evidence="1">F-type ATPases have 2 components, CF(1) - the catalytic core - and CF(0) - the membrane proton channel. CF(1) has five subunits: alpha(3), beta(3), gamma(1), delta(1), epsilon(1). CF(0) has four main subunits: a(1), b(1), b'(1) and c(9-12).</text>
</comment>
<comment type="subcellular location">
    <subcellularLocation>
        <location evidence="1">Plastid</location>
        <location evidence="1">Chloroplast thylakoid membrane</location>
        <topology evidence="1">Peripheral membrane protein</topology>
    </subcellularLocation>
</comment>
<comment type="similarity">
    <text evidence="1">Belongs to the ATPase alpha/beta chains family.</text>
</comment>
<reference key="1">
    <citation type="journal article" date="2000" name="Syst. Biol.">
        <title>Phylogenetics of flowering plants based upon a combined analysis of plastid atpB and rbcL gene sequences.</title>
        <authorList>
            <person name="Savolainen V."/>
            <person name="Chase M.W."/>
            <person name="Morton C.M."/>
            <person name="Hoot S.B."/>
            <person name="Soltis D.E."/>
            <person name="Bayer C."/>
            <person name="Fay M.F."/>
            <person name="de Bruijn A."/>
            <person name="Sullivan S."/>
            <person name="Qiu Y.-L."/>
        </authorList>
    </citation>
    <scope>NUCLEOTIDE SEQUENCE [GENOMIC DNA]</scope>
</reference>